<reference key="1">
    <citation type="journal article" date="1995" name="Science">
        <title>Whole-genome random sequencing and assembly of Haemophilus influenzae Rd.</title>
        <authorList>
            <person name="Fleischmann R.D."/>
            <person name="Adams M.D."/>
            <person name="White O."/>
            <person name="Clayton R.A."/>
            <person name="Kirkness E.F."/>
            <person name="Kerlavage A.R."/>
            <person name="Bult C.J."/>
            <person name="Tomb J.-F."/>
            <person name="Dougherty B.A."/>
            <person name="Merrick J.M."/>
            <person name="McKenney K."/>
            <person name="Sutton G.G."/>
            <person name="FitzHugh W."/>
            <person name="Fields C.A."/>
            <person name="Gocayne J.D."/>
            <person name="Scott J.D."/>
            <person name="Shirley R."/>
            <person name="Liu L.-I."/>
            <person name="Glodek A."/>
            <person name="Kelley J.M."/>
            <person name="Weidman J.F."/>
            <person name="Phillips C.A."/>
            <person name="Spriggs T."/>
            <person name="Hedblom E."/>
            <person name="Cotton M.D."/>
            <person name="Utterback T.R."/>
            <person name="Hanna M.C."/>
            <person name="Nguyen D.T."/>
            <person name="Saudek D.M."/>
            <person name="Brandon R.C."/>
            <person name="Fine L.D."/>
            <person name="Fritchman J.L."/>
            <person name="Fuhrmann J.L."/>
            <person name="Geoghagen N.S.M."/>
            <person name="Gnehm C.L."/>
            <person name="McDonald L.A."/>
            <person name="Small K.V."/>
            <person name="Fraser C.M."/>
            <person name="Smith H.O."/>
            <person name="Venter J.C."/>
        </authorList>
    </citation>
    <scope>NUCLEOTIDE SEQUENCE [LARGE SCALE GENOMIC DNA]</scope>
    <source>
        <strain>ATCC 51907 / DSM 11121 / KW20 / Rd</strain>
    </source>
</reference>
<name>THIL_HAEIN</name>
<dbReference type="EC" id="2.7.4.16" evidence="1"/>
<dbReference type="EMBL" id="L42023">
    <property type="protein sequence ID" value="AAC22952.1"/>
    <property type="status" value="ALT_INIT"/>
    <property type="molecule type" value="Genomic_DNA"/>
</dbReference>
<dbReference type="PIR" id="E64115">
    <property type="entry name" value="E64115"/>
</dbReference>
<dbReference type="RefSeq" id="NP_439456.1">
    <property type="nucleotide sequence ID" value="NC_000907.1"/>
</dbReference>
<dbReference type="SMR" id="Q57190"/>
<dbReference type="STRING" id="71421.HI_1305"/>
<dbReference type="EnsemblBacteria" id="AAC22952">
    <property type="protein sequence ID" value="AAC22952"/>
    <property type="gene ID" value="HI_1305"/>
</dbReference>
<dbReference type="KEGG" id="hin:HI_1305"/>
<dbReference type="PATRIC" id="fig|71421.8.peg.1357"/>
<dbReference type="eggNOG" id="COG0611">
    <property type="taxonomic scope" value="Bacteria"/>
</dbReference>
<dbReference type="HOGENOM" id="CLU_046964_3_0_6"/>
<dbReference type="OrthoDB" id="9802811at2"/>
<dbReference type="PhylomeDB" id="Q57190"/>
<dbReference type="UniPathway" id="UPA00060">
    <property type="reaction ID" value="UER00142"/>
</dbReference>
<dbReference type="Proteomes" id="UP000000579">
    <property type="component" value="Chromosome"/>
</dbReference>
<dbReference type="GO" id="GO:0005524">
    <property type="term" value="F:ATP binding"/>
    <property type="evidence" value="ECO:0007669"/>
    <property type="project" value="UniProtKB-UniRule"/>
</dbReference>
<dbReference type="GO" id="GO:0000287">
    <property type="term" value="F:magnesium ion binding"/>
    <property type="evidence" value="ECO:0007669"/>
    <property type="project" value="UniProtKB-UniRule"/>
</dbReference>
<dbReference type="GO" id="GO:0009030">
    <property type="term" value="F:thiamine-phosphate kinase activity"/>
    <property type="evidence" value="ECO:0000318"/>
    <property type="project" value="GO_Central"/>
</dbReference>
<dbReference type="GO" id="GO:0009228">
    <property type="term" value="P:thiamine biosynthetic process"/>
    <property type="evidence" value="ECO:0000318"/>
    <property type="project" value="GO_Central"/>
</dbReference>
<dbReference type="GO" id="GO:0009229">
    <property type="term" value="P:thiamine diphosphate biosynthetic process"/>
    <property type="evidence" value="ECO:0000318"/>
    <property type="project" value="GO_Central"/>
</dbReference>
<dbReference type="CDD" id="cd02194">
    <property type="entry name" value="ThiL"/>
    <property type="match status" value="1"/>
</dbReference>
<dbReference type="Gene3D" id="3.90.650.10">
    <property type="entry name" value="PurM-like C-terminal domain"/>
    <property type="match status" value="1"/>
</dbReference>
<dbReference type="Gene3D" id="3.30.1330.10">
    <property type="entry name" value="PurM-like, N-terminal domain"/>
    <property type="match status" value="1"/>
</dbReference>
<dbReference type="HAMAP" id="MF_02128">
    <property type="entry name" value="TMP_kinase"/>
    <property type="match status" value="1"/>
</dbReference>
<dbReference type="InterPro" id="IPR010918">
    <property type="entry name" value="PurM-like_C_dom"/>
</dbReference>
<dbReference type="InterPro" id="IPR036676">
    <property type="entry name" value="PurM-like_C_sf"/>
</dbReference>
<dbReference type="InterPro" id="IPR016188">
    <property type="entry name" value="PurM-like_N"/>
</dbReference>
<dbReference type="InterPro" id="IPR036921">
    <property type="entry name" value="PurM-like_N_sf"/>
</dbReference>
<dbReference type="InterPro" id="IPR006283">
    <property type="entry name" value="ThiL-like"/>
</dbReference>
<dbReference type="NCBIfam" id="TIGR01379">
    <property type="entry name" value="thiL"/>
    <property type="match status" value="1"/>
</dbReference>
<dbReference type="PANTHER" id="PTHR30270">
    <property type="entry name" value="THIAMINE-MONOPHOSPHATE KINASE"/>
    <property type="match status" value="1"/>
</dbReference>
<dbReference type="PANTHER" id="PTHR30270:SF0">
    <property type="entry name" value="THIAMINE-MONOPHOSPHATE KINASE"/>
    <property type="match status" value="1"/>
</dbReference>
<dbReference type="Pfam" id="PF00586">
    <property type="entry name" value="AIRS"/>
    <property type="match status" value="1"/>
</dbReference>
<dbReference type="Pfam" id="PF02769">
    <property type="entry name" value="AIRS_C"/>
    <property type="match status" value="1"/>
</dbReference>
<dbReference type="PIRSF" id="PIRSF005303">
    <property type="entry name" value="Thiam_monoph_kin"/>
    <property type="match status" value="1"/>
</dbReference>
<dbReference type="SUPFAM" id="SSF56042">
    <property type="entry name" value="PurM C-terminal domain-like"/>
    <property type="match status" value="1"/>
</dbReference>
<dbReference type="SUPFAM" id="SSF55326">
    <property type="entry name" value="PurM N-terminal domain-like"/>
    <property type="match status" value="1"/>
</dbReference>
<organism>
    <name type="scientific">Haemophilus influenzae (strain ATCC 51907 / DSM 11121 / KW20 / Rd)</name>
    <dbReference type="NCBI Taxonomy" id="71421"/>
    <lineage>
        <taxon>Bacteria</taxon>
        <taxon>Pseudomonadati</taxon>
        <taxon>Pseudomonadota</taxon>
        <taxon>Gammaproteobacteria</taxon>
        <taxon>Pasteurellales</taxon>
        <taxon>Pasteurellaceae</taxon>
        <taxon>Haemophilus</taxon>
    </lineage>
</organism>
<keyword id="KW-0067">ATP-binding</keyword>
<keyword id="KW-0418">Kinase</keyword>
<keyword id="KW-0460">Magnesium</keyword>
<keyword id="KW-0479">Metal-binding</keyword>
<keyword id="KW-0547">Nucleotide-binding</keyword>
<keyword id="KW-1185">Reference proteome</keyword>
<keyword id="KW-0784">Thiamine biosynthesis</keyword>
<keyword id="KW-0808">Transferase</keyword>
<gene>
    <name evidence="1" type="primary">thiL</name>
    <name type="ordered locus">HI_1305</name>
</gene>
<feature type="chain" id="PRO_0000096197" description="Thiamine-monophosphate kinase">
    <location>
        <begin position="1"/>
        <end position="328"/>
    </location>
</feature>
<feature type="binding site" evidence="1">
    <location>
        <position position="30"/>
    </location>
    <ligand>
        <name>Mg(2+)</name>
        <dbReference type="ChEBI" id="CHEBI:18420"/>
        <label>3</label>
    </ligand>
</feature>
<feature type="binding site" evidence="1">
    <location>
        <position position="30"/>
    </location>
    <ligand>
        <name>Mg(2+)</name>
        <dbReference type="ChEBI" id="CHEBI:18420"/>
        <label>4</label>
    </ligand>
</feature>
<feature type="binding site" evidence="1">
    <location>
        <position position="45"/>
    </location>
    <ligand>
        <name>Mg(2+)</name>
        <dbReference type="ChEBI" id="CHEBI:18420"/>
        <label>4</label>
    </ligand>
</feature>
<feature type="binding site" evidence="1">
    <location>
        <position position="46"/>
    </location>
    <ligand>
        <name>Mg(2+)</name>
        <dbReference type="ChEBI" id="CHEBI:18420"/>
        <label>1</label>
    </ligand>
</feature>
<feature type="binding site" evidence="1">
    <location>
        <position position="47"/>
    </location>
    <ligand>
        <name>Mg(2+)</name>
        <dbReference type="ChEBI" id="CHEBI:18420"/>
        <label>1</label>
    </ligand>
</feature>
<feature type="binding site" evidence="1">
    <location>
        <position position="47"/>
    </location>
    <ligand>
        <name>Mg(2+)</name>
        <dbReference type="ChEBI" id="CHEBI:18420"/>
        <label>2</label>
    </ligand>
</feature>
<feature type="binding site" evidence="1">
    <location>
        <position position="54"/>
    </location>
    <ligand>
        <name>substrate</name>
    </ligand>
</feature>
<feature type="binding site" evidence="1">
    <location>
        <position position="75"/>
    </location>
    <ligand>
        <name>Mg(2+)</name>
        <dbReference type="ChEBI" id="CHEBI:18420"/>
        <label>2</label>
    </ligand>
</feature>
<feature type="binding site" evidence="1">
    <location>
        <position position="75"/>
    </location>
    <ligand>
        <name>Mg(2+)</name>
        <dbReference type="ChEBI" id="CHEBI:18420"/>
        <label>3</label>
    </ligand>
</feature>
<feature type="binding site" evidence="1">
    <location>
        <position position="75"/>
    </location>
    <ligand>
        <name>Mg(2+)</name>
        <dbReference type="ChEBI" id="CHEBI:18420"/>
        <label>4</label>
    </ligand>
</feature>
<feature type="binding site" evidence="1">
    <location>
        <begin position="121"/>
        <end position="122"/>
    </location>
    <ligand>
        <name>ATP</name>
        <dbReference type="ChEBI" id="CHEBI:30616"/>
    </ligand>
</feature>
<feature type="binding site" evidence="1">
    <location>
        <position position="122"/>
    </location>
    <ligand>
        <name>Mg(2+)</name>
        <dbReference type="ChEBI" id="CHEBI:18420"/>
        <label>1</label>
    </ligand>
</feature>
<feature type="binding site" evidence="1">
    <location>
        <position position="146"/>
    </location>
    <ligand>
        <name>ATP</name>
        <dbReference type="ChEBI" id="CHEBI:30616"/>
    </ligand>
</feature>
<feature type="binding site" evidence="1">
    <location>
        <position position="211"/>
    </location>
    <ligand>
        <name>Mg(2+)</name>
        <dbReference type="ChEBI" id="CHEBI:18420"/>
        <label>3</label>
    </ligand>
</feature>
<feature type="binding site" evidence="1">
    <location>
        <position position="213"/>
    </location>
    <ligand>
        <name>ATP</name>
        <dbReference type="ChEBI" id="CHEBI:30616"/>
    </ligand>
</feature>
<feature type="binding site" evidence="1">
    <location>
        <position position="214"/>
    </location>
    <ligand>
        <name>Mg(2+)</name>
        <dbReference type="ChEBI" id="CHEBI:18420"/>
        <label>5</label>
    </ligand>
</feature>
<feature type="binding site" evidence="1">
    <location>
        <position position="262"/>
    </location>
    <ligand>
        <name>substrate</name>
    </ligand>
</feature>
<feature type="binding site" evidence="1">
    <location>
        <position position="321"/>
    </location>
    <ligand>
        <name>substrate</name>
    </ligand>
</feature>
<accession>Q57190</accession>
<proteinExistence type="inferred from homology"/>
<comment type="function">
    <text evidence="1">Catalyzes the ATP-dependent phosphorylation of thiamine-monophosphate (TMP) to form thiamine-pyrophosphate (TPP), the active form of vitamin B1.</text>
</comment>
<comment type="catalytic activity">
    <reaction evidence="1">
        <text>thiamine phosphate + ATP = thiamine diphosphate + ADP</text>
        <dbReference type="Rhea" id="RHEA:15913"/>
        <dbReference type="ChEBI" id="CHEBI:30616"/>
        <dbReference type="ChEBI" id="CHEBI:37575"/>
        <dbReference type="ChEBI" id="CHEBI:58937"/>
        <dbReference type="ChEBI" id="CHEBI:456216"/>
        <dbReference type="EC" id="2.7.4.16"/>
    </reaction>
</comment>
<comment type="pathway">
    <text evidence="1">Cofactor biosynthesis; thiamine diphosphate biosynthesis; thiamine diphosphate from thiamine phosphate: step 1/1.</text>
</comment>
<comment type="miscellaneous">
    <text evidence="1">Reaction mechanism of ThiL seems to utilize a direct, inline transfer of the gamma-phosphate of ATP to TMP rather than a phosphorylated enzyme intermediate.</text>
</comment>
<comment type="similarity">
    <text evidence="1">Belongs to the thiamine-monophosphate kinase family.</text>
</comment>
<comment type="sequence caution" evidence="2">
    <conflict type="erroneous initiation">
        <sequence resource="EMBL-CDS" id="AAC22952"/>
    </conflict>
</comment>
<sequence>MAMGEFDLIKRYFQQQILVDDSVQLSIGDDCALVSVPENYQLAITTDTMVENTHFLPTISPEDLAYKAVATNLSDLAAMGAQPKWVSLALTLPNVDENWISTFSQSLLHTLKQYNVTLIGGDTTKGNLSITITAQGFVEKNKGICRHKAQIGDLIYVSSTLGDSAAGLTQILLGKSAVDSDDVFLQQRHLRPTPRIELGQALIGIAHVAIDLSDGLISDLGHILERSQCSAEVELTALPLSSSILNKYDRTQAEQFALSGGEDYELCFTIPPEYKDELELRLKKLNVPCTCIGKINEKCGDFSPRFLRDGKPVNITFSSGFDHFKESK</sequence>
<protein>
    <recommendedName>
        <fullName evidence="1">Thiamine-monophosphate kinase</fullName>
        <shortName evidence="1">TMP kinase</shortName>
        <shortName evidence="1">Thiamine-phosphate kinase</shortName>
        <ecNumber evidence="1">2.7.4.16</ecNumber>
    </recommendedName>
</protein>
<evidence type="ECO:0000255" key="1">
    <source>
        <dbReference type="HAMAP-Rule" id="MF_02128"/>
    </source>
</evidence>
<evidence type="ECO:0000305" key="2"/>